<evidence type="ECO:0000255" key="1">
    <source>
        <dbReference type="PROSITE-ProRule" id="PRU00303"/>
    </source>
</evidence>
<evidence type="ECO:0000305" key="2"/>
<proteinExistence type="inferred from homology"/>
<feature type="signal peptide" evidence="1">
    <location>
        <begin position="1"/>
        <end position="17"/>
    </location>
</feature>
<feature type="chain" id="PRO_0000278317" description="Efem/EfeO family lipoprotein">
    <location>
        <begin position="18"/>
        <end position="284"/>
    </location>
</feature>
<feature type="lipid moiety-binding region" description="N-palmitoyl cysteine" evidence="1">
    <location>
        <position position="18"/>
    </location>
</feature>
<feature type="lipid moiety-binding region" description="S-diacylglycerol cysteine" evidence="1">
    <location>
        <position position="18"/>
    </location>
</feature>
<comment type="subcellular location">
    <subcellularLocation>
        <location evidence="1">Cell membrane</location>
        <topology evidence="1">Lipid-anchor</topology>
    </subcellularLocation>
</comment>
<comment type="similarity">
    <text evidence="2">Belongs to the EfeM/EfeO family.</text>
</comment>
<organism>
    <name type="scientific">Staphylococcus aureus (strain USA300)</name>
    <dbReference type="NCBI Taxonomy" id="367830"/>
    <lineage>
        <taxon>Bacteria</taxon>
        <taxon>Bacillati</taxon>
        <taxon>Bacillota</taxon>
        <taxon>Bacilli</taxon>
        <taxon>Bacillales</taxon>
        <taxon>Staphylococcaceae</taxon>
        <taxon>Staphylococcus</taxon>
    </lineage>
</organism>
<name>EFEMO_STAA3</name>
<sequence>MKKLTTLLLASTLLIAACGNDDSKKDDSKTSKKDDGVKAELKQATKAYDKYTDEQLNEFLKGTEKFVKAIENNDMAQAKALYPKVRMYYERSEPVAEAFGDLDPKIDARLADMKEEKKEKEWSGYHKIEKALYEDKKIDDVTKKDAQQLLKDAKELHAKADTLDIIPKLMLQGSVDLLNEVATSKITGEEEIYSHTDLYDFKANVEGAQKIYDLFKPILEKKDKKLSDDIQMNFDKVNQLLDKYKDNNGGYESFEKVSKKDRKAFADAVNALGEPLSKMAVITE</sequence>
<dbReference type="EMBL" id="CP000255">
    <property type="protein sequence ID" value="ABD22873.1"/>
    <property type="molecule type" value="Genomic_DNA"/>
</dbReference>
<dbReference type="SMR" id="Q2FJS0"/>
<dbReference type="KEGG" id="saa:SAUSA300_0344"/>
<dbReference type="HOGENOM" id="CLU_050342_0_1_9"/>
<dbReference type="OMA" id="WTGWHRL"/>
<dbReference type="Proteomes" id="UP000001939">
    <property type="component" value="Chromosome"/>
</dbReference>
<dbReference type="GO" id="GO:0005886">
    <property type="term" value="C:plasma membrane"/>
    <property type="evidence" value="ECO:0007669"/>
    <property type="project" value="UniProtKB-SubCell"/>
</dbReference>
<dbReference type="CDD" id="cd14656">
    <property type="entry name" value="Imelysin-like_EfeO"/>
    <property type="match status" value="1"/>
</dbReference>
<dbReference type="Gene3D" id="1.20.1420.20">
    <property type="entry name" value="M75 peptidase, HXXE motif"/>
    <property type="match status" value="1"/>
</dbReference>
<dbReference type="InterPro" id="IPR050894">
    <property type="entry name" value="EfeM/EfeO_iron_uptake"/>
</dbReference>
<dbReference type="InterPro" id="IPR018976">
    <property type="entry name" value="Imelysin-like"/>
</dbReference>
<dbReference type="InterPro" id="IPR034981">
    <property type="entry name" value="Imelysin-like_EfeO/Algp7"/>
</dbReference>
<dbReference type="InterPro" id="IPR038352">
    <property type="entry name" value="Imelysin_sf"/>
</dbReference>
<dbReference type="InterPro" id="IPR053377">
    <property type="entry name" value="Iron_uptake_EfeM/EfeO"/>
</dbReference>
<dbReference type="NCBIfam" id="NF041757">
    <property type="entry name" value="EfeO"/>
    <property type="match status" value="1"/>
</dbReference>
<dbReference type="PANTHER" id="PTHR39192">
    <property type="entry name" value="IRON UPTAKE SYSTEM COMPONENT EFEO"/>
    <property type="match status" value="1"/>
</dbReference>
<dbReference type="PANTHER" id="PTHR39192:SF1">
    <property type="entry name" value="IRON UPTAKE SYSTEM COMPONENT EFEO"/>
    <property type="match status" value="1"/>
</dbReference>
<dbReference type="Pfam" id="PF09375">
    <property type="entry name" value="Peptidase_M75"/>
    <property type="match status" value="1"/>
</dbReference>
<dbReference type="PROSITE" id="PS51257">
    <property type="entry name" value="PROKAR_LIPOPROTEIN"/>
    <property type="match status" value="1"/>
</dbReference>
<gene>
    <name type="ordered locus">SAUSA300_0344</name>
</gene>
<protein>
    <recommendedName>
        <fullName>Efem/EfeO family lipoprotein</fullName>
    </recommendedName>
</protein>
<accession>Q2FJS0</accession>
<keyword id="KW-1003">Cell membrane</keyword>
<keyword id="KW-0449">Lipoprotein</keyword>
<keyword id="KW-0472">Membrane</keyword>
<keyword id="KW-0564">Palmitate</keyword>
<keyword id="KW-0732">Signal</keyword>
<reference key="1">
    <citation type="journal article" date="2006" name="Lancet">
        <title>Complete genome sequence of USA300, an epidemic clone of community-acquired meticillin-resistant Staphylococcus aureus.</title>
        <authorList>
            <person name="Diep B.A."/>
            <person name="Gill S.R."/>
            <person name="Chang R.F."/>
            <person name="Phan T.H."/>
            <person name="Chen J.H."/>
            <person name="Davidson M.G."/>
            <person name="Lin F."/>
            <person name="Lin J."/>
            <person name="Carleton H.A."/>
            <person name="Mongodin E.F."/>
            <person name="Sensabaugh G.F."/>
            <person name="Perdreau-Remington F."/>
        </authorList>
    </citation>
    <scope>NUCLEOTIDE SEQUENCE [LARGE SCALE GENOMIC DNA]</scope>
    <source>
        <strain>USA300</strain>
    </source>
</reference>